<organism>
    <name type="scientific">Gibberella zeae (strain ATCC MYA-4620 / CBS 123657 / FGSC 9075 / NRRL 31084 / PH-1)</name>
    <name type="common">Wheat head blight fungus</name>
    <name type="synonym">Fusarium graminearum</name>
    <dbReference type="NCBI Taxonomy" id="229533"/>
    <lineage>
        <taxon>Eukaryota</taxon>
        <taxon>Fungi</taxon>
        <taxon>Dikarya</taxon>
        <taxon>Ascomycota</taxon>
        <taxon>Pezizomycotina</taxon>
        <taxon>Sordariomycetes</taxon>
        <taxon>Hypocreomycetidae</taxon>
        <taxon>Hypocreales</taxon>
        <taxon>Nectriaceae</taxon>
        <taxon>Fusarium</taxon>
    </lineage>
</organism>
<name>AURL2_GIBZE</name>
<sequence length="602" mass="67889">MLFRFLALLPFVAGAFAEYKVHDDTFKPDYVLEATLDDIKINCVSRSSIVFNGTSPGPTIYLQEEQTTWIRVYNKIPDNNVTVHWHGLSQRAAPFSDGTPLVSQWPIPAGQFFDYEIRPEIGDAGSYFYHSHVGFQIVTAFGALIVRDARKPEYKYDGDIPLLVGDNYAAEDEVIEQGLLADPFKWSGEPQAITIQGNSGNKSFYEAPDSSCMPHVVHVDPGKTYRLRFISATALSMIKLGIEDHENLTVIEADGSYTKPAKIDHVQVSPGQRYSYLMKTKTSKEVCGGDKSQYWIRYESRDRPKVISGYALLKYRCDKNQKLPKSLPETSPIELSNSTADYLEYALEGLSEKNNQAFPKLSEVTRTVVIQINQILTTGAYVNGTLNGTVAWAQNGLPWKENVQAERRQVPYLIQIYENGTTPNYTLALEHHGFDPETKAFPAKVGEVLDIVWENNNGPTGGWDYHPMHVHGYHVYDLGSGNGTYNATENEAHFENFTPVLRDTTNLYRYAVKGVPHHTAGWRAWRIRITEENIGAWMMHCHIAQHQVMGMATVWVFGDAEQIRGKFPAPPYTQGYLTYGGSAYGTEDDQPWVNEYYSDKNN</sequence>
<gene>
    <name type="primary">aurL2</name>
    <name evidence="11" type="synonym">GIP10</name>
    <name evidence="10" type="synonym">lac2</name>
    <name type="ORF">FG02330</name>
    <name type="ORF">FGRAMPH1_01T05605</name>
</gene>
<reference key="1">
    <citation type="journal article" date="2007" name="Science">
        <title>The Fusarium graminearum genome reveals a link between localized polymorphism and pathogen specialization.</title>
        <authorList>
            <person name="Cuomo C.A."/>
            <person name="Gueldener U."/>
            <person name="Xu J.-R."/>
            <person name="Trail F."/>
            <person name="Turgeon B.G."/>
            <person name="Di Pietro A."/>
            <person name="Walton J.D."/>
            <person name="Ma L.-J."/>
            <person name="Baker S.E."/>
            <person name="Rep M."/>
            <person name="Adam G."/>
            <person name="Antoniw J."/>
            <person name="Baldwin T."/>
            <person name="Calvo S.E."/>
            <person name="Chang Y.-L."/>
            <person name="DeCaprio D."/>
            <person name="Gale L.R."/>
            <person name="Gnerre S."/>
            <person name="Goswami R.S."/>
            <person name="Hammond-Kosack K."/>
            <person name="Harris L.J."/>
            <person name="Hilburn K."/>
            <person name="Kennell J.C."/>
            <person name="Kroken S."/>
            <person name="Magnuson J.K."/>
            <person name="Mannhaupt G."/>
            <person name="Mauceli E.W."/>
            <person name="Mewes H.-W."/>
            <person name="Mitterbauer R."/>
            <person name="Muehlbauer G."/>
            <person name="Muensterkoetter M."/>
            <person name="Nelson D."/>
            <person name="O'Donnell K."/>
            <person name="Ouellet T."/>
            <person name="Qi W."/>
            <person name="Quesneville H."/>
            <person name="Roncero M.I.G."/>
            <person name="Seong K.-Y."/>
            <person name="Tetko I.V."/>
            <person name="Urban M."/>
            <person name="Waalwijk C."/>
            <person name="Ward T.J."/>
            <person name="Yao J."/>
            <person name="Birren B.W."/>
            <person name="Kistler H.C."/>
        </authorList>
    </citation>
    <scope>NUCLEOTIDE SEQUENCE [LARGE SCALE GENOMIC DNA]</scope>
    <source>
        <strain>ATCC MYA-4620 / CBS 123657 / FGSC 9075 / NRRL 31084 / PH-1</strain>
    </source>
</reference>
<reference key="2">
    <citation type="journal article" date="2010" name="Nature">
        <title>Comparative genomics reveals mobile pathogenicity chromosomes in Fusarium.</title>
        <authorList>
            <person name="Ma L.-J."/>
            <person name="van der Does H.C."/>
            <person name="Borkovich K.A."/>
            <person name="Coleman J.J."/>
            <person name="Daboussi M.-J."/>
            <person name="Di Pietro A."/>
            <person name="Dufresne M."/>
            <person name="Freitag M."/>
            <person name="Grabherr M."/>
            <person name="Henrissat B."/>
            <person name="Houterman P.M."/>
            <person name="Kang S."/>
            <person name="Shim W.-B."/>
            <person name="Woloshuk C."/>
            <person name="Xie X."/>
            <person name="Xu J.-R."/>
            <person name="Antoniw J."/>
            <person name="Baker S.E."/>
            <person name="Bluhm B.H."/>
            <person name="Breakspear A."/>
            <person name="Brown D.W."/>
            <person name="Butchko R.A.E."/>
            <person name="Chapman S."/>
            <person name="Coulson R."/>
            <person name="Coutinho P.M."/>
            <person name="Danchin E.G.J."/>
            <person name="Diener A."/>
            <person name="Gale L.R."/>
            <person name="Gardiner D.M."/>
            <person name="Goff S."/>
            <person name="Hammond-Kosack K.E."/>
            <person name="Hilburn K."/>
            <person name="Hua-Van A."/>
            <person name="Jonkers W."/>
            <person name="Kazan K."/>
            <person name="Kodira C.D."/>
            <person name="Koehrsen M."/>
            <person name="Kumar L."/>
            <person name="Lee Y.-H."/>
            <person name="Li L."/>
            <person name="Manners J.M."/>
            <person name="Miranda-Saavedra D."/>
            <person name="Mukherjee M."/>
            <person name="Park G."/>
            <person name="Park J."/>
            <person name="Park S.-Y."/>
            <person name="Proctor R.H."/>
            <person name="Regev A."/>
            <person name="Ruiz-Roldan M.C."/>
            <person name="Sain D."/>
            <person name="Sakthikumar S."/>
            <person name="Sykes S."/>
            <person name="Schwartz D.C."/>
            <person name="Turgeon B.G."/>
            <person name="Wapinski I."/>
            <person name="Yoder O."/>
            <person name="Young S."/>
            <person name="Zeng Q."/>
            <person name="Zhou S."/>
            <person name="Galagan J."/>
            <person name="Cuomo C.A."/>
            <person name="Kistler H.C."/>
            <person name="Rep M."/>
        </authorList>
    </citation>
    <scope>GENOME REANNOTATION</scope>
    <source>
        <strain>ATCC MYA-4620 / CBS 123657 / FGSC 9075 / NRRL 31084 / PH-1</strain>
    </source>
</reference>
<reference key="3">
    <citation type="journal article" date="2015" name="BMC Genomics">
        <title>The completed genome sequence of the pathogenic ascomycete fungus Fusarium graminearum.</title>
        <authorList>
            <person name="King R."/>
            <person name="Urban M."/>
            <person name="Hammond-Kosack M.C.U."/>
            <person name="Hassani-Pak K."/>
            <person name="Hammond-Kosack K.E."/>
        </authorList>
    </citation>
    <scope>NUCLEOTIDE SEQUENCE [LARGE SCALE GENOMIC DNA]</scope>
    <source>
        <strain>ATCC MYA-4620 / CBS 123657 / FGSC 9075 / NRRL 31084 / PH-1</strain>
    </source>
</reference>
<reference key="4">
    <citation type="journal article" date="2005" name="Appl. Environ. Microbiol.">
        <title>Putative polyketide synthase and laccase genes for biosynthesis of aurofusarin in Gibberella zeae.</title>
        <authorList>
            <person name="Kim J.E."/>
            <person name="Han K.H."/>
            <person name="Jin J."/>
            <person name="Kim H."/>
            <person name="Kim J.C."/>
            <person name="Yun S.H."/>
            <person name="Lee Y.W."/>
        </authorList>
    </citation>
    <scope>FUNCTION</scope>
</reference>
<reference key="5">
    <citation type="journal article" date="2005" name="Fungal Genet. Biol.">
        <title>Identification of a gene cluster responsible for the biosynthesis of aurofusarin in the Fusarium graminearum species complex.</title>
        <authorList>
            <person name="Malz S."/>
            <person name="Grell M.N."/>
            <person name="Thrane C."/>
            <person name="Maier F.J."/>
            <person name="Rosager P."/>
            <person name="Felk A."/>
            <person name="Albertsen K.S."/>
            <person name="Salomon S."/>
            <person name="Bohn L."/>
            <person name="Schaefer W."/>
            <person name="Giese H."/>
        </authorList>
    </citation>
    <scope>FUNCTION</scope>
    <scope>PATHWAY</scope>
</reference>
<reference key="6">
    <citation type="journal article" date="2006" name="Mol. Microbiol.">
        <title>The biosynthetic pathway for aurofusarin in Fusarium graminearum reveals a close link between the naphthoquinones and naphthopyrones.</title>
        <authorList>
            <person name="Frandsen R.J."/>
            <person name="Nielsen N.J."/>
            <person name="Maolanon N."/>
            <person name="Soerensen J.C."/>
            <person name="Olsson S."/>
            <person name="Nielsen J."/>
            <person name="Giese H."/>
        </authorList>
    </citation>
    <scope>FUNCTION</scope>
    <scope>DISRUPTION PHENOTYPE</scope>
    <scope>PATHWAY</scope>
</reference>
<reference key="7">
    <citation type="journal article" date="2006" name="Appl. Environ. Microbiol.">
        <title>GIP2, a putative transcription factor that regulates the aurofusarin biosynthetic gene cluster in Gibberella zeae.</title>
        <authorList>
            <person name="Kim J.E."/>
            <person name="Jin J."/>
            <person name="Kim H."/>
            <person name="Kim J.C."/>
            <person name="Yun S.H."/>
            <person name="Lee Y.W."/>
        </authorList>
    </citation>
    <scope>INDUCTION</scope>
</reference>
<reference key="8">
    <citation type="journal article" date="2011" name="J. Biol. Chem.">
        <title>Two novel classes of enzymes are required for the biosynthesis of aurofusarin in Fusarium graminearum.</title>
        <authorList>
            <person name="Frandsen R.J."/>
            <person name="Schuett C."/>
            <person name="Lund B.W."/>
            <person name="Staerk D."/>
            <person name="Nielsen J."/>
            <person name="Olsson S."/>
            <person name="Giese H."/>
        </authorList>
    </citation>
    <scope>FUNCTION</scope>
</reference>
<reference key="9">
    <citation type="journal article" date="2013" name="Microb. Cell Fact.">
        <title>Reconstruction of the biosynthetic pathway for the core fungal polyketide scaffold rubrofusarin in Saccharomyces cerevisiae.</title>
        <authorList>
            <person name="Rugbjerg P."/>
            <person name="Naesby M."/>
            <person name="Mortensen U.H."/>
            <person name="Frandsen R.J."/>
        </authorList>
    </citation>
    <scope>FUNCTION</scope>
</reference>
<proteinExistence type="evidence at transcript level"/>
<feature type="signal peptide" evidence="2">
    <location>
        <begin position="1"/>
        <end position="17"/>
    </location>
</feature>
<feature type="chain" id="PRO_5010124111" description="Multicopper oxidase aurL2">
    <location>
        <begin position="18"/>
        <end position="602"/>
    </location>
</feature>
<feature type="domain" description="Plastocyanin-like 1" evidence="2">
    <location>
        <begin position="38"/>
        <end position="149"/>
    </location>
</feature>
<feature type="domain" description="Plastocyanin-like 2" evidence="2">
    <location>
        <begin position="160"/>
        <end position="317"/>
    </location>
</feature>
<feature type="domain" description="Plastocyanin-like 3" evidence="2">
    <location>
        <begin position="421"/>
        <end position="556"/>
    </location>
</feature>
<feature type="binding site" evidence="1">
    <location>
        <position position="84"/>
    </location>
    <ligand>
        <name>Cu cation</name>
        <dbReference type="ChEBI" id="CHEBI:23378"/>
        <label>1</label>
    </ligand>
</feature>
<feature type="binding site" evidence="1">
    <location>
        <position position="86"/>
    </location>
    <ligand>
        <name>Cu cation</name>
        <dbReference type="ChEBI" id="CHEBI:23378"/>
        <label>2</label>
    </ligand>
</feature>
<feature type="binding site" evidence="1">
    <location>
        <position position="130"/>
    </location>
    <ligand>
        <name>Cu cation</name>
        <dbReference type="ChEBI" id="CHEBI:23378"/>
        <label>2</label>
    </ligand>
</feature>
<feature type="binding site" evidence="1">
    <location>
        <position position="132"/>
    </location>
    <ligand>
        <name>Cu cation</name>
        <dbReference type="ChEBI" id="CHEBI:23378"/>
        <label>3</label>
    </ligand>
</feature>
<feature type="binding site" evidence="1">
    <location>
        <position position="469"/>
    </location>
    <ligand>
        <name>Cu cation</name>
        <dbReference type="ChEBI" id="CHEBI:23378"/>
        <label>4</label>
    </ligand>
</feature>
<feature type="glycosylation site" description="N-linked (GlcNAc...) asparagine" evidence="3">
    <location>
        <position position="52"/>
    </location>
</feature>
<feature type="glycosylation site" description="N-linked (GlcNAc...) asparagine" evidence="3">
    <location>
        <position position="80"/>
    </location>
</feature>
<feature type="glycosylation site" description="N-linked (GlcNAc...) asparagine" evidence="3">
    <location>
        <position position="201"/>
    </location>
</feature>
<feature type="glycosylation site" description="N-linked (GlcNAc...) asparagine" evidence="3">
    <location>
        <position position="247"/>
    </location>
</feature>
<feature type="glycosylation site" description="N-linked (GlcNAc...) asparagine" evidence="3">
    <location>
        <position position="337"/>
    </location>
</feature>
<feature type="glycosylation site" description="N-linked (GlcNAc...) asparagine" evidence="3">
    <location>
        <position position="383"/>
    </location>
</feature>
<feature type="glycosylation site" description="N-linked (GlcNAc...) asparagine" evidence="3">
    <location>
        <position position="387"/>
    </location>
</feature>
<feature type="glycosylation site" description="N-linked (GlcNAc...) asparagine" evidence="3">
    <location>
        <position position="419"/>
    </location>
</feature>
<feature type="glycosylation site" description="N-linked (GlcNAc...) asparagine" evidence="3">
    <location>
        <position position="424"/>
    </location>
</feature>
<feature type="glycosylation site" description="N-linked (GlcNAc...) asparagine" evidence="3">
    <location>
        <position position="482"/>
    </location>
</feature>
<feature type="glycosylation site" description="N-linked (GlcNAc...) asparagine" evidence="3">
    <location>
        <position position="486"/>
    </location>
</feature>
<dbReference type="EC" id="1.-.-.-" evidence="13"/>
<dbReference type="EMBL" id="HG970332">
    <property type="protein sequence ID" value="CEF74607.1"/>
    <property type="molecule type" value="Genomic_DNA"/>
</dbReference>
<dbReference type="RefSeq" id="XP_011318239.1">
    <property type="nucleotide sequence ID" value="XM_011319937.1"/>
</dbReference>
<dbReference type="SMR" id="I1RF64"/>
<dbReference type="STRING" id="229533.I1RF64"/>
<dbReference type="GlyCosmos" id="I1RF64">
    <property type="glycosylation" value="11 sites, No reported glycans"/>
</dbReference>
<dbReference type="KEGG" id="fgr:FGSG_02330"/>
<dbReference type="VEuPathDB" id="FungiDB:FGRAMPH1_01G05605"/>
<dbReference type="eggNOG" id="KOG1263">
    <property type="taxonomic scope" value="Eukaryota"/>
</dbReference>
<dbReference type="HOGENOM" id="CLU_006504_8_3_1"/>
<dbReference type="InParanoid" id="I1RF64"/>
<dbReference type="OrthoDB" id="32360at110618"/>
<dbReference type="Proteomes" id="UP000070720">
    <property type="component" value="Chromosome 1"/>
</dbReference>
<dbReference type="GO" id="GO:0005507">
    <property type="term" value="F:copper ion binding"/>
    <property type="evidence" value="ECO:0007669"/>
    <property type="project" value="InterPro"/>
</dbReference>
<dbReference type="GO" id="GO:0016491">
    <property type="term" value="F:oxidoreductase activity"/>
    <property type="evidence" value="ECO:0007669"/>
    <property type="project" value="UniProtKB-KW"/>
</dbReference>
<dbReference type="CDD" id="cd13873">
    <property type="entry name" value="CuRO_2_AAO_like_2"/>
    <property type="match status" value="1"/>
</dbReference>
<dbReference type="CDD" id="cd13895">
    <property type="entry name" value="CuRO_3_AAO_like_2"/>
    <property type="match status" value="1"/>
</dbReference>
<dbReference type="Gene3D" id="2.60.40.420">
    <property type="entry name" value="Cupredoxins - blue copper proteins"/>
    <property type="match status" value="3"/>
</dbReference>
<dbReference type="InterPro" id="IPR011707">
    <property type="entry name" value="Cu-oxidase-like_N"/>
</dbReference>
<dbReference type="InterPro" id="IPR001117">
    <property type="entry name" value="Cu-oxidase_2nd"/>
</dbReference>
<dbReference type="InterPro" id="IPR011706">
    <property type="entry name" value="Cu-oxidase_C"/>
</dbReference>
<dbReference type="InterPro" id="IPR045087">
    <property type="entry name" value="Cu-oxidase_fam"/>
</dbReference>
<dbReference type="InterPro" id="IPR033138">
    <property type="entry name" value="Cu_oxidase_CS"/>
</dbReference>
<dbReference type="InterPro" id="IPR002355">
    <property type="entry name" value="Cu_oxidase_Cu_BS"/>
</dbReference>
<dbReference type="InterPro" id="IPR008972">
    <property type="entry name" value="Cupredoxin"/>
</dbReference>
<dbReference type="InterPro" id="IPR035666">
    <property type="entry name" value="MCO_CuRO_3"/>
</dbReference>
<dbReference type="InterPro" id="IPR017762">
    <property type="entry name" value="Multicopper_oxidase_fun"/>
</dbReference>
<dbReference type="NCBIfam" id="TIGR03390">
    <property type="entry name" value="ascorbOXfungal"/>
    <property type="match status" value="1"/>
</dbReference>
<dbReference type="PANTHER" id="PTHR11709:SF394">
    <property type="entry name" value="FI03373P-RELATED"/>
    <property type="match status" value="1"/>
</dbReference>
<dbReference type="PANTHER" id="PTHR11709">
    <property type="entry name" value="MULTI-COPPER OXIDASE"/>
    <property type="match status" value="1"/>
</dbReference>
<dbReference type="Pfam" id="PF00394">
    <property type="entry name" value="Cu-oxidase"/>
    <property type="match status" value="1"/>
</dbReference>
<dbReference type="Pfam" id="PF07731">
    <property type="entry name" value="Cu-oxidase_2"/>
    <property type="match status" value="1"/>
</dbReference>
<dbReference type="Pfam" id="PF07732">
    <property type="entry name" value="Cu-oxidase_3"/>
    <property type="match status" value="1"/>
</dbReference>
<dbReference type="SUPFAM" id="SSF49503">
    <property type="entry name" value="Cupredoxins"/>
    <property type="match status" value="3"/>
</dbReference>
<dbReference type="PROSITE" id="PS00079">
    <property type="entry name" value="MULTICOPPER_OXIDASE1"/>
    <property type="match status" value="1"/>
</dbReference>
<dbReference type="PROSITE" id="PS00080">
    <property type="entry name" value="MULTICOPPER_OXIDASE2"/>
    <property type="match status" value="1"/>
</dbReference>
<accession>I1RF64</accession>
<comment type="function">
    <text evidence="4 5 7 8 9">Multicopper oxidase; part of the gene cluster that mediates the biosynthesis of aurofusarin, a red mycelium pigment which is acting as a mycotoxin (PubMed:15809006, PubMed:15811992, PubMed:16879655). The first step is performed by the polyketide synthase which condenses one acetyl-CoA and 6 malonyl-CoA units to form the first intermediate, the cyclic heptaketide and yellow pigment YWA1 (PubMed:21296881, PubMed:23557488). The C2 hydroxyl group in the pyrone ring of YWA1 is probably formed during ring closure by an aldol-type cyclization reaction (PubMed:21296881). The dehydratase aurZ then acts as the first tailoring enzyme in the aurofusarin biosynthetic pathway by converting YWA1 to nor-rubrofusarin (PubMed:21296881, PubMed:23557488). Nor-rubrofusarin is then methylated to rubrofusarin by the O-methyltransferase aurJ (PubMed:21296881, PubMed:23557488). Rubrofusarin is then transported across the plasma membrane by the rubrofusarin-specific pump aurT for further enzymatic processing by the extracellular complex composed of GIP1, aurF, aurO and aurS to yield aurofusarin (PubMed:21296881).</text>
</comment>
<comment type="pathway">
    <text evidence="4 7">Pigment biosynthesis.</text>
</comment>
<comment type="induction">
    <text evidence="6">Expression is regulated by the aurofusarin biosynthesis cluster-specific transcription factor aurR1/GIP2 (PubMed:16461721).</text>
</comment>
<comment type="disruption phenotype">
    <text evidence="7">Impairs autofusarin biosynthesis and leads to a yellow pigmentation via accumulation of the intermediate rubrofusarin (PubMed:16879655).</text>
</comment>
<comment type="similarity">
    <text evidence="13">Belongs to the multicopper oxidase family.</text>
</comment>
<evidence type="ECO:0000250" key="1">
    <source>
        <dbReference type="UniProtKB" id="Q70KY3"/>
    </source>
</evidence>
<evidence type="ECO:0000255" key="2"/>
<evidence type="ECO:0000255" key="3">
    <source>
        <dbReference type="PROSITE-ProRule" id="PRU00498"/>
    </source>
</evidence>
<evidence type="ECO:0000269" key="4">
    <source>
    </source>
</evidence>
<evidence type="ECO:0000269" key="5">
    <source>
    </source>
</evidence>
<evidence type="ECO:0000269" key="6">
    <source>
    </source>
</evidence>
<evidence type="ECO:0000269" key="7">
    <source>
    </source>
</evidence>
<evidence type="ECO:0000269" key="8">
    <source>
    </source>
</evidence>
<evidence type="ECO:0000269" key="9">
    <source>
    </source>
</evidence>
<evidence type="ECO:0000303" key="10">
    <source>
    </source>
</evidence>
<evidence type="ECO:0000303" key="11">
    <source>
    </source>
</evidence>
<evidence type="ECO:0000303" key="12">
    <source>
    </source>
</evidence>
<evidence type="ECO:0000305" key="13"/>
<keyword id="KW-0186">Copper</keyword>
<keyword id="KW-0325">Glycoprotein</keyword>
<keyword id="KW-0479">Metal-binding</keyword>
<keyword id="KW-0560">Oxidoreductase</keyword>
<keyword id="KW-1185">Reference proteome</keyword>
<keyword id="KW-0677">Repeat</keyword>
<keyword id="KW-0732">Signal</keyword>
<protein>
    <recommendedName>
        <fullName evidence="12">Multicopper oxidase aurL2</fullName>
        <ecNumber evidence="13">1.-.-.-</ecNumber>
    </recommendedName>
    <alternativeName>
        <fullName evidence="12">Aurofusarin biosynthesis cluster protein L2</fullName>
    </alternativeName>
    <alternativeName>
        <fullName evidence="11">Gibberella pigment protein 10</fullName>
    </alternativeName>
    <alternativeName>
        <fullName evidence="10">Laccase-2</fullName>
    </alternativeName>
</protein>